<protein>
    <recommendedName>
        <fullName>Guanine nucleotide-binding protein alpha-15 subunit</fullName>
    </recommendedName>
</protein>
<comment type="function">
    <text>Guanine nucleotide-binding proteins (G proteins) are involved as modulators or transducers in various transmembrane signaling systems.</text>
</comment>
<comment type="subunit">
    <text>G proteins are composed of 3 units; alpha, beta and gamma. The alpha chain contains the guanine nucleotide binding site.</text>
</comment>
<comment type="similarity">
    <text evidence="4">Belongs to the G-alpha family.</text>
</comment>
<accession>Q61DE0</accession>
<accession>A8XFY7</accession>
<evidence type="ECO:0000250" key="1"/>
<evidence type="ECO:0000255" key="2"/>
<evidence type="ECO:0000255" key="3">
    <source>
        <dbReference type="PROSITE-ProRule" id="PRU01230"/>
    </source>
</evidence>
<evidence type="ECO:0000305" key="4"/>
<organism>
    <name type="scientific">Caenorhabditis briggsae</name>
    <dbReference type="NCBI Taxonomy" id="6238"/>
    <lineage>
        <taxon>Eukaryota</taxon>
        <taxon>Metazoa</taxon>
        <taxon>Ecdysozoa</taxon>
        <taxon>Nematoda</taxon>
        <taxon>Chromadorea</taxon>
        <taxon>Rhabditida</taxon>
        <taxon>Rhabditina</taxon>
        <taxon>Rhabditomorpha</taxon>
        <taxon>Rhabditoidea</taxon>
        <taxon>Rhabditidae</taxon>
        <taxon>Peloderinae</taxon>
        <taxon>Caenorhabditis</taxon>
    </lineage>
</organism>
<keyword id="KW-0342">GTP-binding</keyword>
<keyword id="KW-0449">Lipoprotein</keyword>
<keyword id="KW-0460">Magnesium</keyword>
<keyword id="KW-0479">Metal-binding</keyword>
<keyword id="KW-0519">Myristate</keyword>
<keyword id="KW-0547">Nucleotide-binding</keyword>
<keyword id="KW-0564">Palmitate</keyword>
<keyword id="KW-1185">Reference proteome</keyword>
<keyword id="KW-0807">Transducer</keyword>
<gene>
    <name type="primary">gpa-15</name>
    <name type="ORF">CBG12520</name>
</gene>
<proteinExistence type="inferred from homology"/>
<dbReference type="EMBL" id="AY634293">
    <property type="protein sequence ID" value="AAW02899.1"/>
    <property type="molecule type" value="Genomic_DNA"/>
</dbReference>
<dbReference type="EMBL" id="HE600940">
    <property type="protein sequence ID" value="CAP31491.1"/>
    <property type="molecule type" value="Genomic_DNA"/>
</dbReference>
<dbReference type="SMR" id="Q61DE0"/>
<dbReference type="FunCoup" id="Q61DE0">
    <property type="interactions" value="37"/>
</dbReference>
<dbReference type="STRING" id="6238.Q61DE0"/>
<dbReference type="EnsemblMetazoa" id="CBG12520a.1">
    <property type="protein sequence ID" value="CBG12520a.1"/>
    <property type="gene ID" value="WBGene00033461"/>
</dbReference>
<dbReference type="KEGG" id="cbr:CBG_12520"/>
<dbReference type="CTD" id="8582040"/>
<dbReference type="WormBase" id="CBG12520a">
    <property type="protein sequence ID" value="CBP03158"/>
    <property type="gene ID" value="WBGene00033461"/>
    <property type="gene designation" value="Cbr-gpa-15"/>
</dbReference>
<dbReference type="eggNOG" id="KOG0082">
    <property type="taxonomic scope" value="Eukaryota"/>
</dbReference>
<dbReference type="HOGENOM" id="CLU_014184_6_0_1"/>
<dbReference type="InParanoid" id="Q61DE0"/>
<dbReference type="OMA" id="RAEFQMM"/>
<dbReference type="OrthoDB" id="5817230at2759"/>
<dbReference type="Proteomes" id="UP000008549">
    <property type="component" value="Unassembled WGS sequence"/>
</dbReference>
<dbReference type="GO" id="GO:0005737">
    <property type="term" value="C:cytoplasm"/>
    <property type="evidence" value="ECO:0000318"/>
    <property type="project" value="GO_Central"/>
</dbReference>
<dbReference type="GO" id="GO:0005834">
    <property type="term" value="C:heterotrimeric G-protein complex"/>
    <property type="evidence" value="ECO:0000318"/>
    <property type="project" value="GO_Central"/>
</dbReference>
<dbReference type="GO" id="GO:0097730">
    <property type="term" value="C:non-motile cilium"/>
    <property type="evidence" value="ECO:0007669"/>
    <property type="project" value="EnsemblMetazoa"/>
</dbReference>
<dbReference type="GO" id="GO:0001664">
    <property type="term" value="F:G protein-coupled receptor binding"/>
    <property type="evidence" value="ECO:0000318"/>
    <property type="project" value="GO_Central"/>
</dbReference>
<dbReference type="GO" id="GO:0031683">
    <property type="term" value="F:G-protein beta/gamma-subunit complex binding"/>
    <property type="evidence" value="ECO:0000318"/>
    <property type="project" value="GO_Central"/>
</dbReference>
<dbReference type="GO" id="GO:0005525">
    <property type="term" value="F:GTP binding"/>
    <property type="evidence" value="ECO:0007669"/>
    <property type="project" value="UniProtKB-KW"/>
</dbReference>
<dbReference type="GO" id="GO:0003924">
    <property type="term" value="F:GTPase activity"/>
    <property type="evidence" value="ECO:0000318"/>
    <property type="project" value="GO_Central"/>
</dbReference>
<dbReference type="GO" id="GO:0046872">
    <property type="term" value="F:metal ion binding"/>
    <property type="evidence" value="ECO:0007669"/>
    <property type="project" value="UniProtKB-KW"/>
</dbReference>
<dbReference type="GO" id="GO:0007188">
    <property type="term" value="P:adenylate cyclase-modulating G protein-coupled receptor signaling pathway"/>
    <property type="evidence" value="ECO:0000318"/>
    <property type="project" value="GO_Central"/>
</dbReference>
<dbReference type="CDD" id="cd00066">
    <property type="entry name" value="G-alpha"/>
    <property type="match status" value="1"/>
</dbReference>
<dbReference type="FunFam" id="1.10.400.10:FF:000030">
    <property type="entry name" value="Guanine nucleotide-binding protein alpha-8 subunit"/>
    <property type="match status" value="1"/>
</dbReference>
<dbReference type="FunFam" id="3.40.50.300:FF:003800">
    <property type="entry name" value="Guanine nucleotide-binding protein G(k) subunit alpha"/>
    <property type="match status" value="1"/>
</dbReference>
<dbReference type="Gene3D" id="1.10.400.10">
    <property type="entry name" value="GI Alpha 1, domain 2-like"/>
    <property type="match status" value="1"/>
</dbReference>
<dbReference type="Gene3D" id="3.40.50.300">
    <property type="entry name" value="P-loop containing nucleotide triphosphate hydrolases"/>
    <property type="match status" value="1"/>
</dbReference>
<dbReference type="InterPro" id="IPR001019">
    <property type="entry name" value="Gprotein_alpha_su"/>
</dbReference>
<dbReference type="InterPro" id="IPR011025">
    <property type="entry name" value="GproteinA_insert"/>
</dbReference>
<dbReference type="InterPro" id="IPR027417">
    <property type="entry name" value="P-loop_NTPase"/>
</dbReference>
<dbReference type="PANTHER" id="PTHR10218">
    <property type="entry name" value="GTP-BINDING PROTEIN ALPHA SUBUNIT"/>
    <property type="match status" value="1"/>
</dbReference>
<dbReference type="PANTHER" id="PTHR10218:SF323">
    <property type="entry name" value="GUANINE NUCLEOTIDE-BINDING PROTEIN ALPHA-15 SUBUNIT"/>
    <property type="match status" value="1"/>
</dbReference>
<dbReference type="Pfam" id="PF00503">
    <property type="entry name" value="G-alpha"/>
    <property type="match status" value="1"/>
</dbReference>
<dbReference type="PRINTS" id="PR00318">
    <property type="entry name" value="GPROTEINA"/>
</dbReference>
<dbReference type="SMART" id="SM00275">
    <property type="entry name" value="G_alpha"/>
    <property type="match status" value="1"/>
</dbReference>
<dbReference type="SUPFAM" id="SSF52540">
    <property type="entry name" value="P-loop containing nucleoside triphosphate hydrolases"/>
    <property type="match status" value="1"/>
</dbReference>
<dbReference type="SUPFAM" id="SSF47895">
    <property type="entry name" value="Transducin (alpha subunit), insertion domain"/>
    <property type="match status" value="1"/>
</dbReference>
<dbReference type="PROSITE" id="PS51882">
    <property type="entry name" value="G_ALPHA"/>
    <property type="match status" value="1"/>
</dbReference>
<reference key="1">
    <citation type="journal article" date="2005" name="Mol. Genet. Genomics">
        <title>Functional constraint and divergence in the G protein family in Caenorhabditis elegans and Caenorhabditis briggsae.</title>
        <authorList>
            <person name="Jovelin R."/>
            <person name="Phillips P.C."/>
        </authorList>
    </citation>
    <scope>NUCLEOTIDE SEQUENCE [GENOMIC DNA]</scope>
    <source>
        <strain>AF16</strain>
    </source>
</reference>
<reference key="2">
    <citation type="journal article" date="2003" name="PLoS Biol.">
        <title>The genome sequence of Caenorhabditis briggsae: a platform for comparative genomics.</title>
        <authorList>
            <person name="Stein L.D."/>
            <person name="Bao Z."/>
            <person name="Blasiar D."/>
            <person name="Blumenthal T."/>
            <person name="Brent M.R."/>
            <person name="Chen N."/>
            <person name="Chinwalla A."/>
            <person name="Clarke L."/>
            <person name="Clee C."/>
            <person name="Coghlan A."/>
            <person name="Coulson A."/>
            <person name="D'Eustachio P."/>
            <person name="Fitch D.H.A."/>
            <person name="Fulton L.A."/>
            <person name="Fulton R.E."/>
            <person name="Griffiths-Jones S."/>
            <person name="Harris T.W."/>
            <person name="Hillier L.W."/>
            <person name="Kamath R."/>
            <person name="Kuwabara P.E."/>
            <person name="Mardis E.R."/>
            <person name="Marra M.A."/>
            <person name="Miner T.L."/>
            <person name="Minx P."/>
            <person name="Mullikin J.C."/>
            <person name="Plumb R.W."/>
            <person name="Rogers J."/>
            <person name="Schein J.E."/>
            <person name="Sohrmann M."/>
            <person name="Spieth J."/>
            <person name="Stajich J.E."/>
            <person name="Wei C."/>
            <person name="Willey D."/>
            <person name="Wilson R.K."/>
            <person name="Durbin R.M."/>
            <person name="Waterston R.H."/>
        </authorList>
    </citation>
    <scope>NUCLEOTIDE SEQUENCE [LARGE SCALE GENOMIC DNA]</scope>
    <source>
        <strain>AF16</strain>
    </source>
</reference>
<feature type="initiator methionine" description="Removed" evidence="2">
    <location>
        <position position="1"/>
    </location>
</feature>
<feature type="chain" id="PRO_0000203654" description="Guanine nucleotide-binding protein alpha-15 subunit">
    <location>
        <begin position="2"/>
        <end position="356"/>
    </location>
</feature>
<feature type="domain" description="G-alpha" evidence="3">
    <location>
        <begin position="33"/>
        <end position="356"/>
    </location>
</feature>
<feature type="region of interest" description="G1 motif" evidence="3">
    <location>
        <begin position="36"/>
        <end position="49"/>
    </location>
</feature>
<feature type="region of interest" description="G2 motif" evidence="3">
    <location>
        <begin position="175"/>
        <end position="183"/>
    </location>
</feature>
<feature type="region of interest" description="G3 motif" evidence="3">
    <location>
        <begin position="198"/>
        <end position="207"/>
    </location>
</feature>
<feature type="region of interest" description="G4 motif" evidence="3">
    <location>
        <begin position="267"/>
        <end position="274"/>
    </location>
</feature>
<feature type="region of interest" description="G5 motif" evidence="3">
    <location>
        <begin position="326"/>
        <end position="331"/>
    </location>
</feature>
<feature type="binding site" evidence="1">
    <location>
        <begin position="41"/>
        <end position="48"/>
    </location>
    <ligand>
        <name>GTP</name>
        <dbReference type="ChEBI" id="CHEBI:37565"/>
    </ligand>
</feature>
<feature type="binding site" evidence="1">
    <location>
        <position position="48"/>
    </location>
    <ligand>
        <name>Mg(2+)</name>
        <dbReference type="ChEBI" id="CHEBI:18420"/>
    </ligand>
</feature>
<feature type="binding site" evidence="1">
    <location>
        <begin position="177"/>
        <end position="183"/>
    </location>
    <ligand>
        <name>GTP</name>
        <dbReference type="ChEBI" id="CHEBI:37565"/>
    </ligand>
</feature>
<feature type="binding site" evidence="1">
    <location>
        <position position="183"/>
    </location>
    <ligand>
        <name>Mg(2+)</name>
        <dbReference type="ChEBI" id="CHEBI:18420"/>
    </ligand>
</feature>
<feature type="binding site" evidence="1">
    <location>
        <begin position="202"/>
        <end position="206"/>
    </location>
    <ligand>
        <name>GTP</name>
        <dbReference type="ChEBI" id="CHEBI:37565"/>
    </ligand>
</feature>
<feature type="binding site" evidence="1">
    <location>
        <begin position="271"/>
        <end position="274"/>
    </location>
    <ligand>
        <name>GTP</name>
        <dbReference type="ChEBI" id="CHEBI:37565"/>
    </ligand>
</feature>
<feature type="binding site" evidence="1">
    <location>
        <position position="328"/>
    </location>
    <ligand>
        <name>GTP</name>
        <dbReference type="ChEBI" id="CHEBI:37565"/>
    </ligand>
</feature>
<feature type="lipid moiety-binding region" description="N-myristoyl glycine" evidence="2">
    <location>
        <position position="2"/>
    </location>
</feature>
<feature type="lipid moiety-binding region" description="S-palmitoyl cysteine" evidence="2">
    <location>
        <position position="5"/>
    </location>
</feature>
<name>GPA15_CAEBR</name>
<sequence length="356" mass="40838">MGSTCSSPESKEQNRINSIIDKQIRKDEDNEIGNQKLLLLGTGECGKSTILKQINILHSSGYTKTDLKNVAGTVYSNIIQGMATLIKAKDQFYHEVTSPELDADAQHILALAESSKDAMPFIPLTFNSIKRLWHDPTVQKTFERRAEFQMMDTLVYFMNEIDRINDPEYIPTVDDMLRIRIPTMGVVQQVIEIKGTKFRIFDVGGQRSERRKWIHLFDNVNATIFISAINEYNQKLNEDGNANRMKESIKLFETICNSRWFVQAAMILFLNKRDLFEQKLKTTSINVLFSTYLGSNDYAECVAYIQLRFERLNKYADVKKIYTHVTCATDTNQIQLVIDSVVDMVIGRNLRGTGME</sequence>